<name>APOA2_MACFA</name>
<sequence>MKLLAATVLLLTICSLEGALVRRQAEEPSVESLVSQYFQTVTDYGKDLMEKVKSPELQAQAKAYFEKSKEQLTPLVKKAGTDLVNFLSYFVELRTQPATQ</sequence>
<protein>
    <recommendedName>
        <fullName>Apolipoprotein A-II</fullName>
        <shortName>Apo-AII</shortName>
        <shortName>ApoA-II</shortName>
    </recommendedName>
    <alternativeName>
        <fullName>Apolipoprotein A2</fullName>
    </alternativeName>
    <component>
        <recommendedName>
            <fullName>Proapolipoprotein A-II</fullName>
            <shortName>ProapoA-II</shortName>
        </recommendedName>
    </component>
    <component>
        <recommendedName>
            <fullName>Truncated apolipoprotein A-II</fullName>
        </recommendedName>
    </component>
</protein>
<dbReference type="EMBL" id="X68360">
    <property type="protein sequence ID" value="CAA48420.1"/>
    <property type="molecule type" value="Genomic_DNA"/>
</dbReference>
<dbReference type="PIR" id="S30197">
    <property type="entry name" value="S29564"/>
</dbReference>
<dbReference type="RefSeq" id="XP_005541251.1">
    <property type="nucleotide sequence ID" value="XM_005541194.4"/>
</dbReference>
<dbReference type="SMR" id="P18656"/>
<dbReference type="STRING" id="9541.ENSMFAP00000015741"/>
<dbReference type="Ensembl" id="ENSMFAT00000066259.2">
    <property type="protein sequence ID" value="ENSMFAP00000015732.1"/>
    <property type="gene ID" value="ENSMFAG00000031068.2"/>
</dbReference>
<dbReference type="GeneID" id="102119646"/>
<dbReference type="KEGG" id="mcf:102119646"/>
<dbReference type="CTD" id="336"/>
<dbReference type="VEuPathDB" id="HostDB:ENSMFAG00000031068"/>
<dbReference type="eggNOG" id="ENOG502SVYZ">
    <property type="taxonomic scope" value="Eukaryota"/>
</dbReference>
<dbReference type="GeneTree" id="ENSGT00390000003306"/>
<dbReference type="OrthoDB" id="6865at314294"/>
<dbReference type="Proteomes" id="UP000233100">
    <property type="component" value="Chromosome 1"/>
</dbReference>
<dbReference type="Bgee" id="ENSMFAG00000031068">
    <property type="expression patterns" value="Expressed in liver and 5 other cell types or tissues"/>
</dbReference>
<dbReference type="GO" id="GO:0034366">
    <property type="term" value="C:spherical high-density lipoprotein particle"/>
    <property type="evidence" value="ECO:0007669"/>
    <property type="project" value="TreeGrafter"/>
</dbReference>
<dbReference type="GO" id="GO:0120020">
    <property type="term" value="F:cholesterol transfer activity"/>
    <property type="evidence" value="ECO:0007669"/>
    <property type="project" value="TreeGrafter"/>
</dbReference>
<dbReference type="GO" id="GO:0008035">
    <property type="term" value="F:high-density lipoprotein particle binding"/>
    <property type="evidence" value="ECO:0007669"/>
    <property type="project" value="TreeGrafter"/>
</dbReference>
<dbReference type="GO" id="GO:0008289">
    <property type="term" value="F:lipid binding"/>
    <property type="evidence" value="ECO:0007669"/>
    <property type="project" value="InterPro"/>
</dbReference>
<dbReference type="GO" id="GO:0046982">
    <property type="term" value="F:protein heterodimerization activity"/>
    <property type="evidence" value="ECO:0000250"/>
    <property type="project" value="UniProtKB"/>
</dbReference>
<dbReference type="GO" id="GO:0042632">
    <property type="term" value="P:cholesterol homeostasis"/>
    <property type="evidence" value="ECO:0007669"/>
    <property type="project" value="TreeGrafter"/>
</dbReference>
<dbReference type="GO" id="GO:0030301">
    <property type="term" value="P:cholesterol transport"/>
    <property type="evidence" value="ECO:0007669"/>
    <property type="project" value="TreeGrafter"/>
</dbReference>
<dbReference type="GO" id="GO:0042157">
    <property type="term" value="P:lipoprotein metabolic process"/>
    <property type="evidence" value="ECO:0007669"/>
    <property type="project" value="InterPro"/>
</dbReference>
<dbReference type="GO" id="GO:0018206">
    <property type="term" value="P:peptidyl-methionine modification"/>
    <property type="evidence" value="ECO:0000250"/>
    <property type="project" value="UniProtKB"/>
</dbReference>
<dbReference type="GO" id="GO:0032757">
    <property type="term" value="P:positive regulation of interleukin-8 production"/>
    <property type="evidence" value="ECO:0000250"/>
    <property type="project" value="UniProtKB"/>
</dbReference>
<dbReference type="GO" id="GO:0050766">
    <property type="term" value="P:positive regulation of phagocytosis"/>
    <property type="evidence" value="ECO:0000250"/>
    <property type="project" value="UniProtKB"/>
</dbReference>
<dbReference type="GO" id="GO:0018158">
    <property type="term" value="P:protein oxidation"/>
    <property type="evidence" value="ECO:0000250"/>
    <property type="project" value="UniProtKB"/>
</dbReference>
<dbReference type="GO" id="GO:0050821">
    <property type="term" value="P:protein stabilization"/>
    <property type="evidence" value="ECO:0000250"/>
    <property type="project" value="UniProtKB"/>
</dbReference>
<dbReference type="Gene3D" id="6.10.250.100">
    <property type="match status" value="1"/>
</dbReference>
<dbReference type="InterPro" id="IPR006801">
    <property type="entry name" value="ApoA-II"/>
</dbReference>
<dbReference type="InterPro" id="IPR036172">
    <property type="entry name" value="ApoA-II_sf"/>
</dbReference>
<dbReference type="PANTHER" id="PTHR11027">
    <property type="entry name" value="APOLIPOPROTEIN A-II"/>
    <property type="match status" value="1"/>
</dbReference>
<dbReference type="PANTHER" id="PTHR11027:SF0">
    <property type="entry name" value="APOLIPOPROTEIN A-II"/>
    <property type="match status" value="1"/>
</dbReference>
<dbReference type="Pfam" id="PF04711">
    <property type="entry name" value="ApoA-II"/>
    <property type="match status" value="1"/>
</dbReference>
<dbReference type="SUPFAM" id="SSF82936">
    <property type="entry name" value="Apolipoprotein A-II"/>
    <property type="match status" value="1"/>
</dbReference>
<proteinExistence type="evidence at protein level"/>
<comment type="function">
    <text>May stabilize HDL (high density lipoprotein) structure by its association with lipids, and affect the HDL metabolism.</text>
</comment>
<comment type="subunit">
    <text evidence="1">Monomer. Interacts with NAXE and NDRG1 (By similarity).</text>
</comment>
<comment type="subcellular location">
    <subcellularLocation>
        <location evidence="1">Secreted</location>
    </subcellularLocation>
</comment>
<comment type="tissue specificity">
    <text>Plasma.</text>
</comment>
<comment type="similarity">
    <text evidence="3">Belongs to the apolipoprotein A2 family.</text>
</comment>
<feature type="signal peptide">
    <location>
        <begin position="1"/>
        <end position="18"/>
    </location>
</feature>
<feature type="chain" id="PRO_0000425353" description="Proapolipoprotein A-II">
    <location>
        <begin position="19"/>
        <end position="100"/>
    </location>
</feature>
<feature type="chain" id="PRO_0000002006" description="Apolipoprotein A-II" evidence="1">
    <location>
        <begin position="24"/>
        <end position="100"/>
    </location>
</feature>
<feature type="chain" id="PRO_0000416580" description="Truncated apolipoprotein A-II" evidence="1">
    <location>
        <begin position="24"/>
        <end position="99"/>
    </location>
</feature>
<feature type="modified residue" description="Pyrrolidone carboxylic acid" evidence="2">
    <location>
        <position position="24"/>
    </location>
</feature>
<feature type="modified residue" description="Methionine sulfoxide" evidence="1">
    <location>
        <position position="49"/>
    </location>
</feature>
<feature type="modified residue" description="Phosphoserine" evidence="1">
    <location>
        <position position="54"/>
    </location>
</feature>
<feature type="modified residue" description="Phosphoserine" evidence="1">
    <location>
        <position position="68"/>
    </location>
</feature>
<feature type="sequence conflict" description="In Ref. 2; AA sequence." evidence="3" ref="2">
    <original>E</original>
    <variation>Q</variation>
    <location>
        <position position="26"/>
    </location>
</feature>
<accession>P18656</accession>
<keyword id="KW-0165">Cleavage on pair of basic residues</keyword>
<keyword id="KW-0903">Direct protein sequencing</keyword>
<keyword id="KW-0345">HDL</keyword>
<keyword id="KW-0445">Lipid transport</keyword>
<keyword id="KW-0558">Oxidation</keyword>
<keyword id="KW-0597">Phosphoprotein</keyword>
<keyword id="KW-0873">Pyrrolidone carboxylic acid</keyword>
<keyword id="KW-1185">Reference proteome</keyword>
<keyword id="KW-0964">Secreted</keyword>
<keyword id="KW-0732">Signal</keyword>
<keyword id="KW-0813">Transport</keyword>
<organism>
    <name type="scientific">Macaca fascicularis</name>
    <name type="common">Crab-eating macaque</name>
    <name type="synonym">Cynomolgus monkey</name>
    <dbReference type="NCBI Taxonomy" id="9541"/>
    <lineage>
        <taxon>Eukaryota</taxon>
        <taxon>Metazoa</taxon>
        <taxon>Chordata</taxon>
        <taxon>Craniata</taxon>
        <taxon>Vertebrata</taxon>
        <taxon>Euteleostomi</taxon>
        <taxon>Mammalia</taxon>
        <taxon>Eutheria</taxon>
        <taxon>Euarchontoglires</taxon>
        <taxon>Primates</taxon>
        <taxon>Haplorrhini</taxon>
        <taxon>Catarrhini</taxon>
        <taxon>Cercopithecidae</taxon>
        <taxon>Cercopithecinae</taxon>
        <taxon>Macaca</taxon>
    </lineage>
</organism>
<evidence type="ECO:0000250" key="1">
    <source>
        <dbReference type="UniProtKB" id="P02652"/>
    </source>
</evidence>
<evidence type="ECO:0000269" key="2">
    <source>
    </source>
</evidence>
<evidence type="ECO:0000305" key="3"/>
<gene>
    <name type="primary">APOA2</name>
</gene>
<reference key="1">
    <citation type="journal article" date="1993" name="Biochim. Biophys. Acta">
        <title>Molecular cloning and sequence of the cynomolgus monkey apolipoprotein A-II gene.</title>
        <authorList>
            <person name="Osada J."/>
            <person name="Garces C."/>
            <person name="Sastre J."/>
            <person name="Schaefer E.J."/>
            <person name="Ordovas J.M."/>
        </authorList>
    </citation>
    <scope>NUCLEOTIDE SEQUENCE [GENOMIC DNA]</scope>
    <source>
        <tissue>Leukocyte</tissue>
    </source>
</reference>
<reference key="2">
    <citation type="journal article" date="1987" name="Biochemistry">
        <title>Homologues of the human C and A apolipoproteins in the Macaca fascicularis (cynomolgus) monkey.</title>
        <authorList>
            <person name="Herbert P.N."/>
            <person name="Bausserman L.L."/>
            <person name="Lynch K.M."/>
            <person name="Saritelli A.L."/>
            <person name="Kantor M.A."/>
            <person name="Nicolosi R.J."/>
            <person name="Shulman R.S."/>
        </authorList>
    </citation>
    <scope>PROTEIN SEQUENCE OF 24-48</scope>
    <scope>PYROGLUTAMATE FORMATION AT GLN-24</scope>
</reference>